<reference key="1">
    <citation type="journal article" date="2010" name="Nat. Biotechnol.">
        <title>Draft genome sequence of the oilseed species Ricinus communis.</title>
        <authorList>
            <person name="Chan A.P."/>
            <person name="Crabtree J."/>
            <person name="Zhao Q."/>
            <person name="Lorenzi H."/>
            <person name="Orvis J."/>
            <person name="Puiu D."/>
            <person name="Melake-Berhan A."/>
            <person name="Jones K.M."/>
            <person name="Redman J."/>
            <person name="Chen G."/>
            <person name="Cahoon E.B."/>
            <person name="Gedil M."/>
            <person name="Stanke M."/>
            <person name="Haas B.J."/>
            <person name="Wortman J.R."/>
            <person name="Fraser-Liggett C.M."/>
            <person name="Ravel J."/>
            <person name="Rabinowicz P.D."/>
        </authorList>
    </citation>
    <scope>NUCLEOTIDE SEQUENCE [LARGE SCALE GENOMIC DNA]</scope>
    <source>
        <strain>cv. Hale</strain>
    </source>
</reference>
<proteinExistence type="evidence at transcript level"/>
<feature type="chain" id="PRO_0000380240" description="Retinoblastoma-related protein">
    <location>
        <begin position="1"/>
        <end position="1020"/>
    </location>
</feature>
<feature type="region of interest" description="Disordered" evidence="2">
    <location>
        <begin position="382"/>
        <end position="409"/>
    </location>
</feature>
<feature type="region of interest" description="Pocket" evidence="1">
    <location>
        <begin position="415"/>
        <end position="869"/>
    </location>
</feature>
<feature type="region of interest" description="Domain A" evidence="1">
    <location>
        <begin position="415"/>
        <end position="616"/>
    </location>
</feature>
<feature type="region of interest" description="Spacer" evidence="1">
    <location>
        <begin position="617"/>
        <end position="737"/>
    </location>
</feature>
<feature type="region of interest" description="Domain B" evidence="1">
    <location>
        <begin position="738"/>
        <end position="869"/>
    </location>
</feature>
<feature type="compositionally biased region" description="Polar residues" evidence="2">
    <location>
        <begin position="382"/>
        <end position="391"/>
    </location>
</feature>
<feature type="compositionally biased region" description="Polar residues" evidence="2">
    <location>
        <begin position="398"/>
        <end position="409"/>
    </location>
</feature>
<gene>
    <name type="primary">RBR</name>
    <name type="ORF">RCOM_1264670</name>
</gene>
<comment type="function">
    <text evidence="1">Regulator of biological processes that recruits a histone deacetylase to control gene transcription. May play a role in the entry into mitosis, negatively regulating the cell proliferation. Formation of stable complexes with geminiviridae replication-associated proteins may create a cellular environment which favors viral DNA replication (By similarity).</text>
</comment>
<comment type="subcellular location">
    <subcellularLocation>
        <location evidence="1">Nucleus</location>
    </subcellularLocation>
</comment>
<comment type="similarity">
    <text evidence="3">Belongs to the retinoblastoma protein (RB) family.</text>
</comment>
<sequence length="1020" mass="114026">MEDMKPSTASTKNLHHDGVGENDTIEVRFTDFCKIGLSVSEDAYEEAIKLFKGTKHLLLANISAIGNGMPEEAERFWFAFVSYSVKRLSEKIRDNMQQRPDDNGLTLCQILRRAKLNIVDFFKELPQYVVKAGPILSTMYGVDWENRLEAKELQANFVHLSILSRHYKRAYRELFLTSDANVDKQSATAYMSDYHRFGWLLFLALRVHAFSRFKDLVTCTNGLVSVLAILIIHVPVRFRNFNLNDSQRFVKKGDKGVDLLASLCNKYDTSEDELRKTMEKTNNLIADILKKKPHMASEYKNENLDNINTDGLIYYEDLMEESSLRSSLDILEKDYEDAIRCKGELDERVFINEEDSLLGSGSLSGGAISVTGTKRKFDQISSPTKTITSPLSPHRSPASHTNGILGSTNSRMAATPVSTAMTTAKWLRTVISPLPSKPSPQLERFLASCDRDVTNDVIRRAHIILEAIFPSNALGERCVTGSLQSTNLMDNIWAEQRRLEALKLYYRVLEAMCTAEAQILHATNLTSLLTNERFHRCMLACSAELVLATHKTVTMLFPAVLERTGITAFDLSKVIESFIRHEESLPRELRRHLNSLEERLLESMVWEKGSSMYNSLTVARPSLSAEINRLGLLAEPMPSLDAIAVHINFSSGGLPPLSSVSKHEISPGQNGDIRSPKRPCTDYRSVLVERNSFTSPVKDRLLAFTNLKSKLPPPPLQSAFASPTRPNPGGGGETCAETGINIFFSKINKLAAVRINGMVERLQQSQQHIRENVYRLFQQVLSQQTSLFFNRHIDQIILCCFYGVAKISKVNLTFREIIYNYRKQPQCKPQVFRSVFVDWSSARHNGRTGQDHVDIITFYNEIFIPAAKPLLVEVGSAGITVKGSQVPEVNNNKDGQCPASPKVSPFPSLPDMSPKKVSAAHNVYVSPLRTSKMDALISHSSKSYYACVGESTHAYQSPSKDLTAINNRLNGNRNIRGSLNFDDVDVGLVSDSMVAKSLYLQNGSCASTSGAPLKTEQPDP</sequence>
<accession>B9SVG9</accession>
<name>RBR_RICCO</name>
<keyword id="KW-0131">Cell cycle</keyword>
<keyword id="KW-0539">Nucleus</keyword>
<keyword id="KW-1185">Reference proteome</keyword>
<keyword id="KW-0678">Repressor</keyword>
<keyword id="KW-0804">Transcription</keyword>
<keyword id="KW-0805">Transcription regulation</keyword>
<dbReference type="EMBL" id="EQ974168">
    <property type="protein sequence ID" value="EEF32393.1"/>
    <property type="molecule type" value="Genomic_DNA"/>
</dbReference>
<dbReference type="SMR" id="B9SVG9"/>
<dbReference type="FunCoup" id="B9SVG9">
    <property type="interactions" value="2449"/>
</dbReference>
<dbReference type="STRING" id="3988.B9SVG9"/>
<dbReference type="GeneID" id="8283405"/>
<dbReference type="KEGG" id="rcu:8283405"/>
<dbReference type="eggNOG" id="KOG1010">
    <property type="taxonomic scope" value="Eukaryota"/>
</dbReference>
<dbReference type="InParanoid" id="B9SVG9"/>
<dbReference type="OrthoDB" id="844594at2759"/>
<dbReference type="Proteomes" id="UP000008311">
    <property type="component" value="Unassembled WGS sequence"/>
</dbReference>
<dbReference type="GO" id="GO:0000785">
    <property type="term" value="C:chromatin"/>
    <property type="evidence" value="ECO:0000318"/>
    <property type="project" value="GO_Central"/>
</dbReference>
<dbReference type="GO" id="GO:0005634">
    <property type="term" value="C:nucleus"/>
    <property type="evidence" value="ECO:0007669"/>
    <property type="project" value="UniProtKB-SubCell"/>
</dbReference>
<dbReference type="GO" id="GO:0005667">
    <property type="term" value="C:transcription regulator complex"/>
    <property type="evidence" value="ECO:0000318"/>
    <property type="project" value="GO_Central"/>
</dbReference>
<dbReference type="GO" id="GO:0000977">
    <property type="term" value="F:RNA polymerase II transcription regulatory region sequence-specific DNA binding"/>
    <property type="evidence" value="ECO:0000318"/>
    <property type="project" value="GO_Central"/>
</dbReference>
<dbReference type="GO" id="GO:0030154">
    <property type="term" value="P:cell differentiation"/>
    <property type="evidence" value="ECO:0000318"/>
    <property type="project" value="GO_Central"/>
</dbReference>
<dbReference type="GO" id="GO:2000134">
    <property type="term" value="P:negative regulation of G1/S transition of mitotic cell cycle"/>
    <property type="evidence" value="ECO:0000318"/>
    <property type="project" value="GO_Central"/>
</dbReference>
<dbReference type="GO" id="GO:0006357">
    <property type="term" value="P:regulation of transcription by RNA polymerase II"/>
    <property type="evidence" value="ECO:0007669"/>
    <property type="project" value="InterPro"/>
</dbReference>
<dbReference type="CDD" id="cd20601">
    <property type="entry name" value="CYCLIN_AtRBR_like"/>
    <property type="match status" value="1"/>
</dbReference>
<dbReference type="FunFam" id="1.10.472.10:FF:000030">
    <property type="entry name" value="Retinoblastoma-related protein 1"/>
    <property type="match status" value="1"/>
</dbReference>
<dbReference type="FunFam" id="1.10.472.10:FF:000067">
    <property type="entry name" value="Retinoblastoma-related protein 1"/>
    <property type="match status" value="1"/>
</dbReference>
<dbReference type="FunFam" id="1.10.472.140:FF:000003">
    <property type="entry name" value="Retinoblastoma-related protein 1"/>
    <property type="match status" value="1"/>
</dbReference>
<dbReference type="Gene3D" id="1.10.472.140">
    <property type="match status" value="1"/>
</dbReference>
<dbReference type="Gene3D" id="1.10.472.10">
    <property type="entry name" value="Cyclin-like"/>
    <property type="match status" value="2"/>
</dbReference>
<dbReference type="InterPro" id="IPR036915">
    <property type="entry name" value="Cyclin-like_sf"/>
</dbReference>
<dbReference type="InterPro" id="IPR002720">
    <property type="entry name" value="RB_A"/>
</dbReference>
<dbReference type="InterPro" id="IPR002719">
    <property type="entry name" value="RB_B"/>
</dbReference>
<dbReference type="InterPro" id="IPR028309">
    <property type="entry name" value="RB_fam"/>
</dbReference>
<dbReference type="InterPro" id="IPR024599">
    <property type="entry name" value="RB_N"/>
</dbReference>
<dbReference type="PANTHER" id="PTHR13742:SF17">
    <property type="entry name" value="RE32990P-RELATED"/>
    <property type="match status" value="1"/>
</dbReference>
<dbReference type="PANTHER" id="PTHR13742">
    <property type="entry name" value="RETINOBLASTOMA-ASSOCIATED PROTEIN RB -RELATED"/>
    <property type="match status" value="1"/>
</dbReference>
<dbReference type="Pfam" id="PF11934">
    <property type="entry name" value="DUF3452"/>
    <property type="match status" value="1"/>
</dbReference>
<dbReference type="Pfam" id="PF01858">
    <property type="entry name" value="RB_A"/>
    <property type="match status" value="1"/>
</dbReference>
<dbReference type="Pfam" id="PF01857">
    <property type="entry name" value="RB_B"/>
    <property type="match status" value="1"/>
</dbReference>
<dbReference type="SMART" id="SM01367">
    <property type="entry name" value="DUF3452"/>
    <property type="match status" value="1"/>
</dbReference>
<dbReference type="SMART" id="SM01368">
    <property type="entry name" value="RB_A"/>
    <property type="match status" value="1"/>
</dbReference>
<dbReference type="SUPFAM" id="SSF47954">
    <property type="entry name" value="Cyclin-like"/>
    <property type="match status" value="2"/>
</dbReference>
<protein>
    <recommendedName>
        <fullName>Retinoblastoma-related protein</fullName>
    </recommendedName>
</protein>
<evidence type="ECO:0000250" key="1"/>
<evidence type="ECO:0000256" key="2">
    <source>
        <dbReference type="SAM" id="MobiDB-lite"/>
    </source>
</evidence>
<evidence type="ECO:0000305" key="3"/>
<organism>
    <name type="scientific">Ricinus communis</name>
    <name type="common">Castor bean</name>
    <dbReference type="NCBI Taxonomy" id="3988"/>
    <lineage>
        <taxon>Eukaryota</taxon>
        <taxon>Viridiplantae</taxon>
        <taxon>Streptophyta</taxon>
        <taxon>Embryophyta</taxon>
        <taxon>Tracheophyta</taxon>
        <taxon>Spermatophyta</taxon>
        <taxon>Magnoliopsida</taxon>
        <taxon>eudicotyledons</taxon>
        <taxon>Gunneridae</taxon>
        <taxon>Pentapetalae</taxon>
        <taxon>rosids</taxon>
        <taxon>fabids</taxon>
        <taxon>Malpighiales</taxon>
        <taxon>Euphorbiaceae</taxon>
        <taxon>Acalyphoideae</taxon>
        <taxon>Acalypheae</taxon>
        <taxon>Ricinus</taxon>
    </lineage>
</organism>